<organism>
    <name type="scientific">Wolbachia sp. subsp. Drosophila simulans (strain wRi)</name>
    <dbReference type="NCBI Taxonomy" id="66084"/>
    <lineage>
        <taxon>Bacteria</taxon>
        <taxon>Pseudomonadati</taxon>
        <taxon>Pseudomonadota</taxon>
        <taxon>Alphaproteobacteria</taxon>
        <taxon>Rickettsiales</taxon>
        <taxon>Anaplasmataceae</taxon>
        <taxon>Wolbachieae</taxon>
        <taxon>Wolbachia</taxon>
    </lineage>
</organism>
<comment type="function">
    <text evidence="1">Binds to the 23S rRNA.</text>
</comment>
<comment type="subunit">
    <text evidence="1">Part of the 50S ribosomal subunit.</text>
</comment>
<comment type="similarity">
    <text evidence="1">Belongs to the universal ribosomal protein uL15 family.</text>
</comment>
<evidence type="ECO:0000255" key="1">
    <source>
        <dbReference type="HAMAP-Rule" id="MF_01341"/>
    </source>
</evidence>
<evidence type="ECO:0000256" key="2">
    <source>
        <dbReference type="SAM" id="MobiDB-lite"/>
    </source>
</evidence>
<evidence type="ECO:0000305" key="3"/>
<dbReference type="EMBL" id="CP001391">
    <property type="protein sequence ID" value="ACN95283.1"/>
    <property type="molecule type" value="Genomic_DNA"/>
</dbReference>
<dbReference type="RefSeq" id="WP_006279863.1">
    <property type="nucleotide sequence ID" value="NZ_MKIF01000201.1"/>
</dbReference>
<dbReference type="SMR" id="C0R2Z1"/>
<dbReference type="STRING" id="66084.WRi_005010"/>
<dbReference type="GeneID" id="70036146"/>
<dbReference type="KEGG" id="wri:WRi_005010"/>
<dbReference type="HOGENOM" id="CLU_055188_4_0_5"/>
<dbReference type="Proteomes" id="UP000001293">
    <property type="component" value="Chromosome"/>
</dbReference>
<dbReference type="GO" id="GO:0022625">
    <property type="term" value="C:cytosolic large ribosomal subunit"/>
    <property type="evidence" value="ECO:0007669"/>
    <property type="project" value="TreeGrafter"/>
</dbReference>
<dbReference type="GO" id="GO:0019843">
    <property type="term" value="F:rRNA binding"/>
    <property type="evidence" value="ECO:0007669"/>
    <property type="project" value="UniProtKB-UniRule"/>
</dbReference>
<dbReference type="GO" id="GO:0003735">
    <property type="term" value="F:structural constituent of ribosome"/>
    <property type="evidence" value="ECO:0007669"/>
    <property type="project" value="InterPro"/>
</dbReference>
<dbReference type="GO" id="GO:0006412">
    <property type="term" value="P:translation"/>
    <property type="evidence" value="ECO:0007669"/>
    <property type="project" value="UniProtKB-UniRule"/>
</dbReference>
<dbReference type="Gene3D" id="3.100.10.10">
    <property type="match status" value="1"/>
</dbReference>
<dbReference type="HAMAP" id="MF_01341">
    <property type="entry name" value="Ribosomal_uL15"/>
    <property type="match status" value="1"/>
</dbReference>
<dbReference type="InterPro" id="IPR030878">
    <property type="entry name" value="Ribosomal_uL15"/>
</dbReference>
<dbReference type="InterPro" id="IPR021131">
    <property type="entry name" value="Ribosomal_uL15/eL18"/>
</dbReference>
<dbReference type="InterPro" id="IPR036227">
    <property type="entry name" value="Ribosomal_uL15/eL18_sf"/>
</dbReference>
<dbReference type="InterPro" id="IPR005749">
    <property type="entry name" value="Ribosomal_uL15_bac-type"/>
</dbReference>
<dbReference type="NCBIfam" id="TIGR01071">
    <property type="entry name" value="rplO_bact"/>
    <property type="match status" value="1"/>
</dbReference>
<dbReference type="PANTHER" id="PTHR12934">
    <property type="entry name" value="50S RIBOSOMAL PROTEIN L15"/>
    <property type="match status" value="1"/>
</dbReference>
<dbReference type="PANTHER" id="PTHR12934:SF11">
    <property type="entry name" value="LARGE RIBOSOMAL SUBUNIT PROTEIN UL15M"/>
    <property type="match status" value="1"/>
</dbReference>
<dbReference type="Pfam" id="PF00828">
    <property type="entry name" value="Ribosomal_L27A"/>
    <property type="match status" value="1"/>
</dbReference>
<dbReference type="SUPFAM" id="SSF52080">
    <property type="entry name" value="Ribosomal proteins L15p and L18e"/>
    <property type="match status" value="1"/>
</dbReference>
<name>RL15_WOLWR</name>
<reference key="1">
    <citation type="journal article" date="2009" name="Proc. Natl. Acad. Sci. U.S.A.">
        <title>The mosaic genome structure of the Wolbachia wRi strain infecting Drosophila simulans.</title>
        <authorList>
            <person name="Klasson L."/>
            <person name="Westberg J."/>
            <person name="Sapountzis P."/>
            <person name="Naeslund K."/>
            <person name="Lutnaes Y."/>
            <person name="Darby A.C."/>
            <person name="Veneti Z."/>
            <person name="Chen L."/>
            <person name="Braig H.R."/>
            <person name="Garrett R."/>
            <person name="Bourtzis K."/>
            <person name="Andersson S.G."/>
        </authorList>
    </citation>
    <scope>NUCLEOTIDE SEQUENCE [LARGE SCALE GENOMIC DNA]</scope>
    <source>
        <strain>wRi</strain>
    </source>
</reference>
<keyword id="KW-0687">Ribonucleoprotein</keyword>
<keyword id="KW-0689">Ribosomal protein</keyword>
<keyword id="KW-0694">RNA-binding</keyword>
<keyword id="KW-0699">rRNA-binding</keyword>
<proteinExistence type="inferred from homology"/>
<gene>
    <name evidence="1" type="primary">rplO</name>
    <name type="ordered locus">WRi_005010</name>
</gene>
<feature type="chain" id="PRO_1000166326" description="Large ribosomal subunit protein uL15">
    <location>
        <begin position="1"/>
        <end position="156"/>
    </location>
</feature>
<feature type="region of interest" description="Disordered" evidence="2">
    <location>
        <begin position="25"/>
        <end position="48"/>
    </location>
</feature>
<feature type="compositionally biased region" description="Basic residues" evidence="2">
    <location>
        <begin position="34"/>
        <end position="43"/>
    </location>
</feature>
<sequence length="156" mass="17150">MNNAVKLNSIFTKLSKKKKPKLLGRGIGCGKGKTSGRGHKGQKARSGVSINGFEGGQQSIYTRLPKRGFKPIRRSIYSIINVGDIQRLMEAKKIVKDSVIDKERLYKLGFIKSIKDKIKLLNKGKLSEKFVFHVDFASEAAKKSVASVGGSVEILS</sequence>
<accession>C0R2Z1</accession>
<protein>
    <recommendedName>
        <fullName evidence="1">Large ribosomal subunit protein uL15</fullName>
    </recommendedName>
    <alternativeName>
        <fullName evidence="3">50S ribosomal protein L15</fullName>
    </alternativeName>
</protein>